<dbReference type="EMBL" id="D88829">
    <property type="protein sequence ID" value="BAA13726.1"/>
    <property type="molecule type" value="mRNA"/>
</dbReference>
<dbReference type="SMR" id="P89059"/>
<dbReference type="GO" id="GO:0005576">
    <property type="term" value="C:extracellular region"/>
    <property type="evidence" value="ECO:0007669"/>
    <property type="project" value="UniProtKB-SubCell"/>
</dbReference>
<dbReference type="GO" id="GO:0044155">
    <property type="term" value="C:host caveola"/>
    <property type="evidence" value="ECO:0007669"/>
    <property type="project" value="UniProtKB-SubCell"/>
</dbReference>
<dbReference type="GO" id="GO:0044169">
    <property type="term" value="C:host cell rough endoplasmic reticulum membrane"/>
    <property type="evidence" value="ECO:0007669"/>
    <property type="project" value="UniProtKB-SubCell"/>
</dbReference>
<dbReference type="GO" id="GO:0016020">
    <property type="term" value="C:membrane"/>
    <property type="evidence" value="ECO:0007669"/>
    <property type="project" value="UniProtKB-UniRule"/>
</dbReference>
<dbReference type="GO" id="GO:0015267">
    <property type="term" value="F:channel activity"/>
    <property type="evidence" value="ECO:0007669"/>
    <property type="project" value="UniProtKB-KW"/>
</dbReference>
<dbReference type="GO" id="GO:0046872">
    <property type="term" value="F:metal ion binding"/>
    <property type="evidence" value="ECO:0007669"/>
    <property type="project" value="UniProtKB-UniRule"/>
</dbReference>
<dbReference type="GO" id="GO:0090729">
    <property type="term" value="F:toxin activity"/>
    <property type="evidence" value="ECO:0007669"/>
    <property type="project" value="UniProtKB-UniRule"/>
</dbReference>
<dbReference type="GO" id="GO:0034220">
    <property type="term" value="P:monoatomic ion transmembrane transport"/>
    <property type="evidence" value="ECO:0007669"/>
    <property type="project" value="UniProtKB-KW"/>
</dbReference>
<dbReference type="GO" id="GO:0039520">
    <property type="term" value="P:symbiont-mediated activation of host autophagy"/>
    <property type="evidence" value="ECO:0007669"/>
    <property type="project" value="UniProtKB-KW"/>
</dbReference>
<dbReference type="GO" id="GO:0016032">
    <property type="term" value="P:viral process"/>
    <property type="evidence" value="ECO:0007669"/>
    <property type="project" value="UniProtKB-UniRule"/>
</dbReference>
<dbReference type="FunFam" id="1.20.5.430:FF:000005">
    <property type="entry name" value="Non-structural glycoprotein 4"/>
    <property type="match status" value="1"/>
</dbReference>
<dbReference type="Gene3D" id="1.20.5.430">
    <property type="match status" value="1"/>
</dbReference>
<dbReference type="HAMAP" id="MF_04091">
    <property type="entry name" value="ROTA_NSP4"/>
    <property type="match status" value="1"/>
</dbReference>
<dbReference type="InterPro" id="IPR002107">
    <property type="entry name" value="Rotavirus_NSP4"/>
</dbReference>
<dbReference type="Pfam" id="PF01452">
    <property type="entry name" value="Rota_NSP4"/>
    <property type="match status" value="1"/>
</dbReference>
<dbReference type="SUPFAM" id="SSF58030">
    <property type="entry name" value="Rotavirus nonstructural proteins"/>
    <property type="match status" value="1"/>
</dbReference>
<organismHost>
    <name type="scientific">Homo sapiens</name>
    <name type="common">Human</name>
    <dbReference type="NCBI Taxonomy" id="9606"/>
</organismHost>
<evidence type="ECO:0000255" key="1">
    <source>
        <dbReference type="HAMAP-Rule" id="MF_04091"/>
    </source>
</evidence>
<proteinExistence type="evidence at transcript level"/>
<reference key="1">
    <citation type="journal article" date="1997" name="J. Gen. Virol.">
        <title>Three major alleles of rotavirus NSP4 proteins identified by sequence analysis.</title>
        <authorList>
            <person name="Horie Y."/>
            <person name="Masamune O."/>
            <person name="Nakagomi O."/>
        </authorList>
    </citation>
    <scope>NUCLEOTIDE SEQUENCE [MRNA]</scope>
</reference>
<keyword id="KW-1072">Activation of host autophagy by virus</keyword>
<keyword id="KW-0106">Calcium</keyword>
<keyword id="KW-0260">Enterotoxin</keyword>
<keyword id="KW-0325">Glycoprotein</keyword>
<keyword id="KW-1038">Host endoplasmic reticulum</keyword>
<keyword id="KW-1043">Host membrane</keyword>
<keyword id="KW-0945">Host-virus interaction</keyword>
<keyword id="KW-0407">Ion channel</keyword>
<keyword id="KW-0406">Ion transport</keyword>
<keyword id="KW-0472">Membrane</keyword>
<keyword id="KW-0479">Metal-binding</keyword>
<keyword id="KW-0964">Secreted</keyword>
<keyword id="KW-0735">Signal-anchor</keyword>
<keyword id="KW-0800">Toxin</keyword>
<keyword id="KW-0812">Transmembrane</keyword>
<keyword id="KW-1133">Transmembrane helix</keyword>
<keyword id="KW-0813">Transport</keyword>
<keyword id="KW-1182">Viral ion channel</keyword>
<keyword id="KW-0843">Virulence</keyword>
<accession>P89059</accession>
<feature type="chain" id="PRO_0000369481" description="Non-structural glycoprotein 4">
    <location>
        <begin position="1"/>
        <end position="175"/>
    </location>
</feature>
<feature type="topological domain" description="Lumenal" evidence="1">
    <location>
        <begin position="1"/>
        <end position="28"/>
    </location>
</feature>
<feature type="transmembrane region" description="Helical; Signal-anchor for type III membrane protein" evidence="1">
    <location>
        <begin position="29"/>
        <end position="51"/>
    </location>
</feature>
<feature type="topological domain" description="Cytoplasmic" evidence="1">
    <location>
        <begin position="52"/>
        <end position="175"/>
    </location>
</feature>
<feature type="binding site" evidence="1">
    <location>
        <position position="120"/>
    </location>
    <ligand>
        <name>Ca(2+)</name>
        <dbReference type="ChEBI" id="CHEBI:29108"/>
    </ligand>
</feature>
<feature type="binding site" evidence="1">
    <location>
        <position position="123"/>
    </location>
    <ligand>
        <name>Ca(2+)</name>
        <dbReference type="ChEBI" id="CHEBI:29108"/>
    </ligand>
</feature>
<feature type="glycosylation site" description="N-linked (GlcNAc...) asparagine; by host" evidence="1">
    <location>
        <position position="8"/>
    </location>
</feature>
<feature type="glycosylation site" description="N-linked (GlcNAc...) asparagine; by host" evidence="1">
    <location>
        <position position="18"/>
    </location>
</feature>
<name>NSP4_ROTKU</name>
<protein>
    <recommendedName>
        <fullName evidence="1">Non-structural glycoprotein 4</fullName>
        <shortName evidence="1">NSP4</shortName>
    </recommendedName>
    <alternativeName>
        <fullName evidence="1">NCVP5</fullName>
    </alternativeName>
    <alternativeName>
        <fullName evidence="1">NS28</fullName>
    </alternativeName>
</protein>
<sequence length="175" mass="20333">MEKFTDLNYTLSVITLMNSTLHTILEDPGMAYFPYIASVLTVLFTLHKASIPTMKIALKTSKCSYKVVKYCIVTILNTLLKLAGYKEQITTKDEIEKQMDRVVKEMRRQLEMIDKLTTREIEQVELLKRIYDKLIVRSTGEIDMTKEINQKNVRTLEEWESGKNPYEPKEVTAAM</sequence>
<comment type="function">
    <text evidence="1">Plays an essential role in the virus replication cycle by acting as a viroporin. Creates a pore in the host endoplasmic reticulum and as a consequence releases Ca(2+) in the cytoplasm of infected cell. In turn, high levels of cytoplasmic calcium trigger membrane trafficking and transport of viral ER-associated proteins to viroplasms, sites of viral genome replication and immature particle assembly.</text>
</comment>
<comment type="function">
    <text evidence="1">The secreted form acts as an enterotoxin that causes phospholipase C-dependent elevation of the intracellular calcium concentration in host intestinal mucosa cells. Increased concentration of intracellular calcium disrupts the cytoskeleton and the tight junctions, raising the paracellular permeability. Potentiates chloride ion secretion through a calcium ion-dependent signaling pathway, inducing age-dependent diarrhea. To perform this enterotoxigenic role in vivo, NSP4 is released from infected enterocytes in a soluble form capable of diffusing within the intestinal lumen and interacting with host plasma membrane receptors on neighboring epithelial cells such as integrins ITGA1/ITGB1 and ITGA2/ITGB1.</text>
</comment>
<comment type="subunit">
    <text evidence="1">Homotetramer. Interacts with the immature particle in the viroplasm. Interacts with host CAV1, early and late in infection. Interacts with host integrin ITGA1/ITGB1 heterodimer. Interacts with host integrin ITGA2/ITGB1 heterodimer. Interaction with microtubules blocks trafficking to the Golgi apparatus.</text>
</comment>
<comment type="subcellular location">
    <subcellularLocation>
        <location evidence="1">Host rough endoplasmic reticulum membrane</location>
        <topology evidence="1">Single-pass type III membrane protein</topology>
    </subcellularLocation>
    <subcellularLocation>
        <location evidence="1">Host membrane</location>
        <location evidence="1">Host caveola</location>
        <topology evidence="1">Single-pass type III membrane protein</topology>
    </subcellularLocation>
    <subcellularLocation>
        <location evidence="1">Secreted</location>
    </subcellularLocation>
    <text evidence="1">NSP4 also localizes in vesicular structures which contain autophagosomal markers and associate with viroplasms in virus-infected cells. Additionally, a soluble form of glycosylated NSP4 is secreted despite retention of its transmembrane domain.</text>
</comment>
<comment type="domain">
    <text evidence="1">Binds 1 calcium ion per tetramer.</text>
</comment>
<comment type="PTM">
    <text evidence="1">The N-glycosyl content is primarily Man(9)GlcNAc, with a small amount of Man(8)GlcNAc.</text>
</comment>
<comment type="similarity">
    <text evidence="1">Belongs to the rotavirus NSP4 family.</text>
</comment>
<organism>
    <name type="scientific">Rotavirus A (strain RVA/Human/Japan/KUN/1980/G2P1B[4])</name>
    <name type="common">RV-A</name>
    <dbReference type="NCBI Taxonomy" id="578829"/>
    <lineage>
        <taxon>Viruses</taxon>
        <taxon>Riboviria</taxon>
        <taxon>Orthornavirae</taxon>
        <taxon>Duplornaviricota</taxon>
        <taxon>Resentoviricetes</taxon>
        <taxon>Reovirales</taxon>
        <taxon>Sedoreoviridae</taxon>
        <taxon>Rotavirus</taxon>
        <taxon>Rotavirus A</taxon>
    </lineage>
</organism>